<accession>Q2P2A5</accession>
<comment type="similarity">
    <text evidence="1">Belongs to the UPF0178 family.</text>
</comment>
<gene>
    <name type="ordered locus">XOO2567</name>
</gene>
<evidence type="ECO:0000255" key="1">
    <source>
        <dbReference type="HAMAP-Rule" id="MF_00489"/>
    </source>
</evidence>
<name>Y2567_XANOM</name>
<dbReference type="EMBL" id="AP008229">
    <property type="protein sequence ID" value="BAE69322.1"/>
    <property type="molecule type" value="Genomic_DNA"/>
</dbReference>
<dbReference type="RefSeq" id="WP_011408745.1">
    <property type="nucleotide sequence ID" value="NC_007705.1"/>
</dbReference>
<dbReference type="SMR" id="Q2P2A5"/>
<dbReference type="KEGG" id="xom:XOO2567"/>
<dbReference type="HOGENOM" id="CLU_106619_2_1_6"/>
<dbReference type="CDD" id="cd18720">
    <property type="entry name" value="PIN_YqxD-like"/>
    <property type="match status" value="1"/>
</dbReference>
<dbReference type="HAMAP" id="MF_00489">
    <property type="entry name" value="UPF0178"/>
    <property type="match status" value="1"/>
</dbReference>
<dbReference type="InterPro" id="IPR003791">
    <property type="entry name" value="UPF0178"/>
</dbReference>
<dbReference type="NCBIfam" id="NF001095">
    <property type="entry name" value="PRK00124.1"/>
    <property type="match status" value="1"/>
</dbReference>
<dbReference type="PANTHER" id="PTHR35146">
    <property type="entry name" value="UPF0178 PROTEIN YAII"/>
    <property type="match status" value="1"/>
</dbReference>
<dbReference type="PANTHER" id="PTHR35146:SF1">
    <property type="entry name" value="UPF0178 PROTEIN YAII"/>
    <property type="match status" value="1"/>
</dbReference>
<dbReference type="Pfam" id="PF02639">
    <property type="entry name" value="DUF188"/>
    <property type="match status" value="1"/>
</dbReference>
<feature type="chain" id="PRO_0000241839" description="UPF0178 protein XOO2567">
    <location>
        <begin position="1"/>
        <end position="161"/>
    </location>
</feature>
<reference key="1">
    <citation type="journal article" date="2005" name="Jpn. Agric. Res. Q.">
        <title>Genome sequence of Xanthomonas oryzae pv. oryzae suggests contribution of large numbers of effector genes and insertion sequences to its race diversity.</title>
        <authorList>
            <person name="Ochiai H."/>
            <person name="Inoue Y."/>
            <person name="Takeya M."/>
            <person name="Sasaki A."/>
            <person name="Kaku H."/>
        </authorList>
    </citation>
    <scope>NUCLEOTIDE SEQUENCE [LARGE SCALE GENOMIC DNA]</scope>
    <source>
        <strain>MAFF 311018</strain>
    </source>
</reference>
<sequence>MKPLHTPKPAQIWVDADACPAVIRDILFRAAARTGTALTLVANHSLSTPTLPHVRAIQVPGGPDAADDAIAERVAAGDLVVTQDIPLAARVLEAGATAVGPRGEPFTSNTIKERLSVRGFMEELRGAGIATGGPSALHARDRQAFAAQLDRWLAAQPRPPL</sequence>
<protein>
    <recommendedName>
        <fullName evidence="1">UPF0178 protein XOO2567</fullName>
    </recommendedName>
</protein>
<proteinExistence type="inferred from homology"/>
<organism>
    <name type="scientific">Xanthomonas oryzae pv. oryzae (strain MAFF 311018)</name>
    <dbReference type="NCBI Taxonomy" id="342109"/>
    <lineage>
        <taxon>Bacteria</taxon>
        <taxon>Pseudomonadati</taxon>
        <taxon>Pseudomonadota</taxon>
        <taxon>Gammaproteobacteria</taxon>
        <taxon>Lysobacterales</taxon>
        <taxon>Lysobacteraceae</taxon>
        <taxon>Xanthomonas</taxon>
    </lineage>
</organism>